<organism>
    <name type="scientific">Homo sapiens</name>
    <name type="common">Human</name>
    <dbReference type="NCBI Taxonomy" id="9606"/>
    <lineage>
        <taxon>Eukaryota</taxon>
        <taxon>Metazoa</taxon>
        <taxon>Chordata</taxon>
        <taxon>Craniata</taxon>
        <taxon>Vertebrata</taxon>
        <taxon>Euteleostomi</taxon>
        <taxon>Mammalia</taxon>
        <taxon>Eutheria</taxon>
        <taxon>Euarchontoglires</taxon>
        <taxon>Primates</taxon>
        <taxon>Haplorrhini</taxon>
        <taxon>Catarrhini</taxon>
        <taxon>Hominidae</taxon>
        <taxon>Homo</taxon>
    </lineage>
</organism>
<comment type="function">
    <text evidence="4">Binds peptides derived from antigens that access the endocytic route of antigen presenting cells (APC) and presents them on the cell surface for recognition by the CD4 T-cells. The peptide binding cleft accommodates peptides of 10-30 residues. The peptides presented by MHC class II molecules are generated mostly by degradation of proteins that access the endocytic route, where they are processed by lysosomal proteases and other hydrolases. Exogenous antigens that have been endocytosed by the APC are thus readily available for presentation via MHC II molecules, and for this reason this antigen presentation pathway is usually referred to as exogenous. As membrane proteins on their way to degradation in lysosomes as part of their normal turn-over are also contained in the endosomal/lysosomal compartments, exogenous antigens must compete with those derived from endogenous components. Autophagy is also a source of endogenous peptides, autophagosomes constitutively fuse with MHC class II loading compartments. In addition to APCs, other cells of the gastrointestinal tract, such as epithelial cells, express MHC class II molecules and CD74 and act as APCs, which is an unusual trait of the GI tract. To produce a MHC class II molecule that presents an antigen, three MHC class II molecules (heterodimers of an alpha and a beta chain) associate with a CD74 trimer in the ER to form a heterononamer. Soon after the entry of this complex into the endosomal/lysosomal system where antigen processing occurs, CD74 undergoes a sequential degradation by various proteases, including CTSS and CTSL, leaving a small fragment termed CLIP (class-II-associated invariant chain peptide). The removal of CLIP is facilitated by HLA-DM via direct binding to the alpha-beta-CLIP complex so that CLIP is released. HLA-DM stabilizes MHC class II molecules until primary high affinity antigenic peptides are bound. The MHC II molecule bound to a peptide is then transported to the cell membrane surface. In B-cells, the interaction between HLA-DM and MHC class II molecules is regulated by HLA-DO. Primary dendritic cells (DCs) also to express HLA-DO. Lysosomal microenvironment has been implicated in the regulation of antigen loading into MHC II molecules, increased acidification produces increased proteolysis and efficient peptide loading.</text>
</comment>
<comment type="subunit">
    <text evidence="4">Heterodimer of an alpha and a beta subunit; also referred as MHC class II molecule. Dimer formation with HLA-DQB2, but not with HLA-DQB1, is required for efficient exit from the endoplasmic reticulum (ER). In the ER, forms a heterononamer; 3 MHC class II molecules bind to a CD74 homotrimer (also known as invariant chain or HLA class II histocompatibility antigen gamma chain). In the endosomal/lysosomal system; CD74 undergoes sequential degradation by various proteases; leaving a small fragment termed CLIP on each MHC class II molecule. MHC class II molecule interacts with HLA_DM, and HLA_DO in B-cells, in order to release CLIP and facilitate the binding of antigenic peptides. Association with HLA-DMA also occurs in skin Langerhans cells, in post-Golgi compartments.</text>
</comment>
<comment type="interaction">
    <interactant intactId="EBI-19949550">
        <id>P01906</id>
    </interactant>
    <interactant intactId="EBI-2820517">
        <id>Q8TAF8</id>
        <label>LHFPL5</label>
    </interactant>
    <organismsDiffer>false</organismsDiffer>
    <experiments>3</experiments>
</comment>
<comment type="subcellular location">
    <subcellularLocation>
        <location evidence="4">Cell membrane</location>
        <topology evidence="4">Single-pass type I membrane protein</topology>
    </subcellularLocation>
    <subcellularLocation>
        <location evidence="4">Endoplasmic reticulum membrane</location>
        <topology evidence="4">Single-pass type I membrane protein</topology>
    </subcellularLocation>
    <subcellularLocation>
        <location evidence="4">Golgi apparatus</location>
        <location evidence="4">trans-Golgi network membrane</location>
        <topology evidence="4">Single-pass type I membrane protein</topology>
    </subcellularLocation>
    <subcellularLocation>
        <location evidence="4">Endosome membrane</location>
        <topology evidence="4">Single-pass type I membrane protein</topology>
    </subcellularLocation>
    <subcellularLocation>
        <location evidence="4">Lysosome membrane</location>
        <topology evidence="4">Single-pass type I membrane protein</topology>
    </subcellularLocation>
    <text>The MHC class II complex transits through a number of intracellular compartments in the endocytic pathway until it reaches the cell membrane for antigen presentation.</text>
</comment>
<comment type="tissue specificity">
    <text evidence="4 5">Restricted to skin Langerhans cells, although some expression at low levels may occur at the surface of B lymphoblastoid cells.</text>
</comment>
<comment type="similarity">
    <text evidence="6">Belongs to the MHC class II family.</text>
</comment>
<protein>
    <recommendedName>
        <fullName>HLA class II histocompatibility antigen, DQ alpha 2 chain</fullName>
    </recommendedName>
    <alternativeName>
        <fullName>DX alpha chain</fullName>
    </alternativeName>
    <alternativeName>
        <fullName>HLA class II histocompatibility antigen, DQ(6) alpha chain</fullName>
    </alternativeName>
    <alternativeName>
        <fullName>HLA-DQA1</fullName>
    </alternativeName>
    <alternativeName>
        <fullName>MHC class II DQA2</fullName>
    </alternativeName>
</protein>
<keyword id="KW-1064">Adaptive immunity</keyword>
<keyword id="KW-1003">Cell membrane</keyword>
<keyword id="KW-1015">Disulfide bond</keyword>
<keyword id="KW-0256">Endoplasmic reticulum</keyword>
<keyword id="KW-0967">Endosome</keyword>
<keyword id="KW-0325">Glycoprotein</keyword>
<keyword id="KW-0333">Golgi apparatus</keyword>
<keyword id="KW-0391">Immunity</keyword>
<keyword id="KW-0458">Lysosome</keyword>
<keyword id="KW-0472">Membrane</keyword>
<keyword id="KW-0491">MHC II</keyword>
<keyword id="KW-1267">Proteomics identification</keyword>
<keyword id="KW-1185">Reference proteome</keyword>
<keyword id="KW-0732">Signal</keyword>
<keyword id="KW-0812">Transmembrane</keyword>
<keyword id="KW-1133">Transmembrane helix</keyword>
<feature type="signal peptide">
    <location>
        <begin position="1"/>
        <end position="23"/>
    </location>
</feature>
<feature type="chain" id="PRO_0000018973" description="HLA class II histocompatibility antigen, DQ alpha 2 chain">
    <location>
        <begin position="24"/>
        <end position="255"/>
    </location>
</feature>
<feature type="topological domain" description="Extracellular" evidence="1">
    <location>
        <begin position="24"/>
        <end position="217"/>
    </location>
</feature>
<feature type="transmembrane region" description="Helical" evidence="1">
    <location>
        <begin position="218"/>
        <end position="240"/>
    </location>
</feature>
<feature type="topological domain" description="Cytoplasmic" evidence="1">
    <location>
        <begin position="241"/>
        <end position="255"/>
    </location>
</feature>
<feature type="domain" description="Ig-like C1-type">
    <location>
        <begin position="113"/>
        <end position="205"/>
    </location>
</feature>
<feature type="region of interest" description="Alpha-1">
    <location>
        <begin position="24"/>
        <end position="110"/>
    </location>
</feature>
<feature type="region of interest" description="Alpha-2">
    <location>
        <begin position="111"/>
        <end position="204"/>
    </location>
</feature>
<feature type="region of interest" description="Connecting peptide">
    <location>
        <begin position="205"/>
        <end position="217"/>
    </location>
</feature>
<feature type="glycosylation site" description="N-linked (GlcNAc...) asparagine" evidence="1">
    <location>
        <position position="104"/>
    </location>
</feature>
<feature type="glycosylation site" description="N-linked (GlcNAc...) asparagine" evidence="1">
    <location>
        <position position="144"/>
    </location>
</feature>
<feature type="disulfide bond" evidence="2">
    <location>
        <begin position="133"/>
        <end position="189"/>
    </location>
</feature>
<feature type="sequence variant" id="VAR_033431" description="In dbSNP:rs9276436." evidence="3">
    <original>V</original>
    <variation>A</variation>
    <location>
        <position position="227"/>
    </location>
</feature>
<feature type="sequence variant" id="VAR_050392" description="In dbSNP:rs2071800." evidence="3">
    <original>G</original>
    <variation>D</variation>
    <location>
        <position position="247"/>
    </location>
</feature>
<feature type="sequence conflict" description="In Ref. 1; AAA59834." evidence="6" ref="1">
    <original>S</original>
    <variation>T</variation>
    <location>
        <position position="84"/>
    </location>
</feature>
<feature type="sequence conflict" description="In Ref. 4; CAM26196." evidence="6" ref="4">
    <original>R</original>
    <variation>G</variation>
    <location>
        <position position="101"/>
    </location>
</feature>
<dbReference type="EMBL" id="M29615">
    <property type="protein sequence ID" value="AAA59834.1"/>
    <property type="molecule type" value="Genomic_DNA"/>
</dbReference>
<dbReference type="EMBL" id="M29614">
    <property type="protein sequence ID" value="AAA59834.1"/>
    <property type="status" value="JOINED"/>
    <property type="molecule type" value="Genomic_DNA"/>
</dbReference>
<dbReference type="EMBL" id="X00453">
    <property type="protein sequence ID" value="CAA25142.1"/>
    <property type="molecule type" value="Genomic_DNA"/>
</dbReference>
<dbReference type="EMBL" id="X00454">
    <property type="protein sequence ID" value="CAA25142.1"/>
    <property type="status" value="JOINED"/>
    <property type="molecule type" value="Genomic_DNA"/>
</dbReference>
<dbReference type="EMBL" id="X00455">
    <property type="protein sequence ID" value="CAA25142.1"/>
    <property type="status" value="JOINED"/>
    <property type="molecule type" value="Genomic_DNA"/>
</dbReference>
<dbReference type="EMBL" id="X00456">
    <property type="protein sequence ID" value="CAA25142.1"/>
    <property type="status" value="JOINED"/>
    <property type="molecule type" value="Genomic_DNA"/>
</dbReference>
<dbReference type="EMBL" id="M17237">
    <property type="protein sequence ID" value="AAA59605.1"/>
    <property type="molecule type" value="Genomic_DNA"/>
</dbReference>
<dbReference type="EMBL" id="M17235">
    <property type="protein sequence ID" value="AAA59605.1"/>
    <property type="status" value="JOINED"/>
    <property type="molecule type" value="Genomic_DNA"/>
</dbReference>
<dbReference type="EMBL" id="AL773543">
    <property type="status" value="NOT_ANNOTATED_CDS"/>
    <property type="molecule type" value="Genomic_DNA"/>
</dbReference>
<dbReference type="EMBL" id="CR759848">
    <property type="status" value="NOT_ANNOTATED_CDS"/>
    <property type="molecule type" value="Genomic_DNA"/>
</dbReference>
<dbReference type="EMBL" id="BX927131">
    <property type="protein sequence ID" value="CAM26196.1"/>
    <property type="molecule type" value="Genomic_DNA"/>
</dbReference>
<dbReference type="EMBL" id="BX248406">
    <property type="protein sequence ID" value="CAM26196.1"/>
    <property type="status" value="JOINED"/>
    <property type="molecule type" value="Genomic_DNA"/>
</dbReference>
<dbReference type="EMBL" id="AL672104">
    <property type="status" value="NOT_ANNOTATED_CDS"/>
    <property type="molecule type" value="Genomic_DNA"/>
</dbReference>
<dbReference type="EMBL" id="AL713890">
    <property type="status" value="NOT_ANNOTATED_CDS"/>
    <property type="molecule type" value="Genomic_DNA"/>
</dbReference>
<dbReference type="EMBL" id="BX927160">
    <property type="status" value="NOT_ANNOTATED_CDS"/>
    <property type="molecule type" value="Genomic_DNA"/>
</dbReference>
<dbReference type="EMBL" id="BX927168">
    <property type="status" value="NOT_ANNOTATED_CDS"/>
    <property type="molecule type" value="Genomic_DNA"/>
</dbReference>
<dbReference type="EMBL" id="CR753846">
    <property type="status" value="NOT_ANNOTATED_CDS"/>
    <property type="molecule type" value="Genomic_DNA"/>
</dbReference>
<dbReference type="EMBL" id="CR936921">
    <property type="status" value="NOT_ANNOTATED_CDS"/>
    <property type="molecule type" value="Genomic_DNA"/>
</dbReference>
<dbReference type="EMBL" id="S71248">
    <property type="protein sequence ID" value="AAD14077.1"/>
    <property type="molecule type" value="Genomic_DNA"/>
</dbReference>
<dbReference type="CCDS" id="CCDS4753.1"/>
<dbReference type="PIR" id="A02210">
    <property type="entry name" value="HLHUDX"/>
</dbReference>
<dbReference type="PIR" id="I54439">
    <property type="entry name" value="I54439"/>
</dbReference>
<dbReference type="RefSeq" id="NP_064440.1">
    <property type="nucleotide sequence ID" value="NM_020056.5"/>
</dbReference>
<dbReference type="SMR" id="P01906"/>
<dbReference type="BioGRID" id="109363">
    <property type="interactions" value="2"/>
</dbReference>
<dbReference type="FunCoup" id="P01906">
    <property type="interactions" value="448"/>
</dbReference>
<dbReference type="IntAct" id="P01906">
    <property type="interactions" value="2"/>
</dbReference>
<dbReference type="STRING" id="9606.ENSP00000364076"/>
<dbReference type="GlyCosmos" id="P01906">
    <property type="glycosylation" value="2 sites, No reported glycans"/>
</dbReference>
<dbReference type="GlyGen" id="P01906">
    <property type="glycosylation" value="3 sites"/>
</dbReference>
<dbReference type="iPTMnet" id="P01906"/>
<dbReference type="PhosphoSitePlus" id="P01906"/>
<dbReference type="BioMuta" id="HLA-DQA2"/>
<dbReference type="DMDM" id="122192"/>
<dbReference type="jPOST" id="P01906"/>
<dbReference type="MassIVE" id="P01906"/>
<dbReference type="PaxDb" id="9606-ENSP00000364076"/>
<dbReference type="PeptideAtlas" id="P01906"/>
<dbReference type="Antibodypedia" id="48442">
    <property type="antibodies" value="234 antibodies from 28 providers"/>
</dbReference>
<dbReference type="DNASU" id="3118"/>
<dbReference type="Ensembl" id="ENST00000241802.9">
    <property type="protein sequence ID" value="ENSP00000241802.5"/>
    <property type="gene ID" value="ENSG00000206301.9"/>
</dbReference>
<dbReference type="Ensembl" id="ENST00000374940.4">
    <property type="protein sequence ID" value="ENSP00000364076.3"/>
    <property type="gene ID" value="ENSG00000237541.4"/>
</dbReference>
<dbReference type="Ensembl" id="ENST00000415898.2">
    <property type="protein sequence ID" value="ENSP00000400695.2"/>
    <property type="gene ID" value="ENSG00000231526.3"/>
</dbReference>
<dbReference type="Ensembl" id="ENST00000443184.2">
    <property type="protein sequence ID" value="ENSP00000405833.2"/>
    <property type="gene ID" value="ENSG00000257473.7"/>
</dbReference>
<dbReference type="Ensembl" id="ENST00000446482.2">
    <property type="protein sequence ID" value="ENSP00000390725.2"/>
    <property type="gene ID" value="ENSG00000225103.3"/>
</dbReference>
<dbReference type="Ensembl" id="ENST00000447735.5">
    <property type="protein sequence ID" value="ENSP00000393431.1"/>
    <property type="gene ID" value="ENSG00000223793.7"/>
</dbReference>
<dbReference type="Ensembl" id="ENST00000449560.5">
    <property type="protein sequence ID" value="ENSP00000401098.1"/>
    <property type="gene ID" value="ENSG00000233192.7"/>
</dbReference>
<dbReference type="Ensembl" id="ENST00000453672.2">
    <property type="protein sequence ID" value="ENSP00000387768.2"/>
    <property type="gene ID" value="ENSG00000231823.3"/>
</dbReference>
<dbReference type="Ensembl" id="ENST00000546801.2">
    <property type="protein sequence ID" value="ENSP00000447668.1"/>
    <property type="gene ID" value="ENSG00000233192.7"/>
</dbReference>
<dbReference type="Ensembl" id="ENST00000551533.1">
    <property type="protein sequence ID" value="ENSP00000448003.1"/>
    <property type="gene ID" value="ENSG00000223793.7"/>
</dbReference>
<dbReference type="GeneID" id="3118"/>
<dbReference type="KEGG" id="hsa:3118"/>
<dbReference type="MANE-Select" id="ENST00000374940.4">
    <property type="protein sequence ID" value="ENSP00000364076.3"/>
    <property type="RefSeq nucleotide sequence ID" value="NM_020056.5"/>
    <property type="RefSeq protein sequence ID" value="NP_064440.1"/>
</dbReference>
<dbReference type="UCSC" id="uc003obx.4">
    <property type="organism name" value="human"/>
</dbReference>
<dbReference type="AGR" id="HGNC:4943"/>
<dbReference type="CTD" id="3118"/>
<dbReference type="DisGeNET" id="3118"/>
<dbReference type="GeneCards" id="HLA-DQA2"/>
<dbReference type="HGNC" id="HGNC:4943">
    <property type="gene designation" value="HLA-DQA2"/>
</dbReference>
<dbReference type="HPA" id="ENSG00000237541">
    <property type="expression patterns" value="Tissue enhanced (lung, lymphoid tissue)"/>
</dbReference>
<dbReference type="MIM" id="613503">
    <property type="type" value="gene"/>
</dbReference>
<dbReference type="neXtProt" id="NX_P01906"/>
<dbReference type="OpenTargets" id="ENSG00000237541"/>
<dbReference type="PharmGKB" id="PA35067"/>
<dbReference type="VEuPathDB" id="HostDB:ENSG00000237541"/>
<dbReference type="eggNOG" id="ENOG502RXYJ">
    <property type="taxonomic scope" value="Eukaryota"/>
</dbReference>
<dbReference type="GeneTree" id="ENSGT00940000162892"/>
<dbReference type="HOGENOM" id="CLU_069380_0_0_1"/>
<dbReference type="InParanoid" id="P01906"/>
<dbReference type="OMA" id="CPPIGEL"/>
<dbReference type="OrthoDB" id="8925804at2759"/>
<dbReference type="PAN-GO" id="P01906">
    <property type="GO annotations" value="6 GO annotations based on evolutionary models"/>
</dbReference>
<dbReference type="PhylomeDB" id="P01906"/>
<dbReference type="TreeFam" id="TF333797"/>
<dbReference type="PathwayCommons" id="P01906"/>
<dbReference type="Reactome" id="R-HSA-202424">
    <property type="pathway name" value="Downstream TCR signaling"/>
</dbReference>
<dbReference type="Reactome" id="R-HSA-202427">
    <property type="pathway name" value="Phosphorylation of CD3 and TCR zeta chains"/>
</dbReference>
<dbReference type="Reactome" id="R-HSA-202430">
    <property type="pathway name" value="Translocation of ZAP-70 to Immunological synapse"/>
</dbReference>
<dbReference type="Reactome" id="R-HSA-202433">
    <property type="pathway name" value="Generation of second messenger molecules"/>
</dbReference>
<dbReference type="Reactome" id="R-HSA-2132295">
    <property type="pathway name" value="MHC class II antigen presentation"/>
</dbReference>
<dbReference type="Reactome" id="R-HSA-389948">
    <property type="pathway name" value="Co-inhibition by PD-1"/>
</dbReference>
<dbReference type="Reactome" id="R-HSA-877300">
    <property type="pathway name" value="Interferon gamma signaling"/>
</dbReference>
<dbReference type="SignaLink" id="P01906"/>
<dbReference type="SIGNOR" id="P01906"/>
<dbReference type="BioGRID-ORCS" id="3118">
    <property type="hits" value="12 hits in 1136 CRISPR screens"/>
</dbReference>
<dbReference type="ChiTaRS" id="HLA-DQA2">
    <property type="organism name" value="human"/>
</dbReference>
<dbReference type="GeneWiki" id="HLA-DQA2"/>
<dbReference type="GenomeRNAi" id="3118"/>
<dbReference type="Pharos" id="P01906">
    <property type="development level" value="Tbio"/>
</dbReference>
<dbReference type="PRO" id="PR:P01906"/>
<dbReference type="Proteomes" id="UP000005640">
    <property type="component" value="Chromosome 6"/>
</dbReference>
<dbReference type="RNAct" id="P01906">
    <property type="molecule type" value="protein"/>
</dbReference>
<dbReference type="Bgee" id="ENSG00000206301">
    <property type="expression patterns" value="Expressed in nasopharynx and 8 other cell types or tissues"/>
</dbReference>
<dbReference type="ExpressionAtlas" id="P01906">
    <property type="expression patterns" value="baseline and differential"/>
</dbReference>
<dbReference type="GO" id="GO:0030669">
    <property type="term" value="C:clathrin-coated endocytic vesicle membrane"/>
    <property type="evidence" value="ECO:0000304"/>
    <property type="project" value="Reactome"/>
</dbReference>
<dbReference type="GO" id="GO:0030666">
    <property type="term" value="C:endocytic vesicle membrane"/>
    <property type="evidence" value="ECO:0000304"/>
    <property type="project" value="Reactome"/>
</dbReference>
<dbReference type="GO" id="GO:0012507">
    <property type="term" value="C:ER to Golgi transport vesicle membrane"/>
    <property type="evidence" value="ECO:0000304"/>
    <property type="project" value="Reactome"/>
</dbReference>
<dbReference type="GO" id="GO:0000139">
    <property type="term" value="C:Golgi membrane"/>
    <property type="evidence" value="ECO:0000304"/>
    <property type="project" value="Reactome"/>
</dbReference>
<dbReference type="GO" id="GO:0031902">
    <property type="term" value="C:late endosome membrane"/>
    <property type="evidence" value="ECO:0000318"/>
    <property type="project" value="GO_Central"/>
</dbReference>
<dbReference type="GO" id="GO:0098553">
    <property type="term" value="C:lumenal side of endoplasmic reticulum membrane"/>
    <property type="evidence" value="ECO:0000304"/>
    <property type="project" value="Reactome"/>
</dbReference>
<dbReference type="GO" id="GO:0005765">
    <property type="term" value="C:lysosomal membrane"/>
    <property type="evidence" value="ECO:0000318"/>
    <property type="project" value="GO_Central"/>
</dbReference>
<dbReference type="GO" id="GO:0042613">
    <property type="term" value="C:MHC class II protein complex"/>
    <property type="evidence" value="ECO:0000318"/>
    <property type="project" value="GO_Central"/>
</dbReference>
<dbReference type="GO" id="GO:0005886">
    <property type="term" value="C:plasma membrane"/>
    <property type="evidence" value="ECO:0000304"/>
    <property type="project" value="Reactome"/>
</dbReference>
<dbReference type="GO" id="GO:0032588">
    <property type="term" value="C:trans-Golgi network membrane"/>
    <property type="evidence" value="ECO:0000304"/>
    <property type="project" value="Reactome"/>
</dbReference>
<dbReference type="GO" id="GO:0030658">
    <property type="term" value="C:transport vesicle membrane"/>
    <property type="evidence" value="ECO:0000304"/>
    <property type="project" value="Reactome"/>
</dbReference>
<dbReference type="GO" id="GO:0023026">
    <property type="term" value="F:MHC class II protein complex binding"/>
    <property type="evidence" value="ECO:0000318"/>
    <property type="project" value="GO_Central"/>
</dbReference>
<dbReference type="GO" id="GO:0032395">
    <property type="term" value="F:MHC class II receptor activity"/>
    <property type="evidence" value="ECO:0000303"/>
    <property type="project" value="UniProtKB"/>
</dbReference>
<dbReference type="GO" id="GO:0042605">
    <property type="term" value="F:peptide antigen binding"/>
    <property type="evidence" value="ECO:0000318"/>
    <property type="project" value="GO_Central"/>
</dbReference>
<dbReference type="GO" id="GO:0002250">
    <property type="term" value="P:adaptive immune response"/>
    <property type="evidence" value="ECO:0007669"/>
    <property type="project" value="UniProtKB-KW"/>
</dbReference>
<dbReference type="GO" id="GO:0019886">
    <property type="term" value="P:antigen processing and presentation of exogenous peptide antigen via MHC class II"/>
    <property type="evidence" value="ECO:0000318"/>
    <property type="project" value="GO_Central"/>
</dbReference>
<dbReference type="GO" id="GO:0006955">
    <property type="term" value="P:immune response"/>
    <property type="evidence" value="ECO:0000303"/>
    <property type="project" value="UniProtKB"/>
</dbReference>
<dbReference type="GO" id="GO:0002503">
    <property type="term" value="P:peptide antigen assembly with MHC class II protein complex"/>
    <property type="evidence" value="ECO:0000318"/>
    <property type="project" value="GO_Central"/>
</dbReference>
<dbReference type="GO" id="GO:0050778">
    <property type="term" value="P:positive regulation of immune response"/>
    <property type="evidence" value="ECO:0000318"/>
    <property type="project" value="GO_Central"/>
</dbReference>
<dbReference type="GO" id="GO:0050870">
    <property type="term" value="P:positive regulation of T cell activation"/>
    <property type="evidence" value="ECO:0000318"/>
    <property type="project" value="GO_Central"/>
</dbReference>
<dbReference type="CDD" id="cd21008">
    <property type="entry name" value="IgC1_MHC_II_alpha_HLA-DQ"/>
    <property type="match status" value="1"/>
</dbReference>
<dbReference type="FunFam" id="2.60.40.10:FF:000280">
    <property type="entry name" value="HLA class II histocompatibility antigen, DR alpha chain"/>
    <property type="match status" value="1"/>
</dbReference>
<dbReference type="FunFam" id="3.10.320.10:FF:000002">
    <property type="entry name" value="HLA class II histocompatibility antigen, DR alpha chain"/>
    <property type="match status" value="1"/>
</dbReference>
<dbReference type="Gene3D" id="3.10.320.10">
    <property type="entry name" value="Class II Histocompatibility Antigen, M Beta Chain, Chain B, domain 1"/>
    <property type="match status" value="1"/>
</dbReference>
<dbReference type="Gene3D" id="2.60.40.10">
    <property type="entry name" value="Immunoglobulins"/>
    <property type="match status" value="1"/>
</dbReference>
<dbReference type="InterPro" id="IPR007110">
    <property type="entry name" value="Ig-like_dom"/>
</dbReference>
<dbReference type="InterPro" id="IPR036179">
    <property type="entry name" value="Ig-like_dom_sf"/>
</dbReference>
<dbReference type="InterPro" id="IPR013783">
    <property type="entry name" value="Ig-like_fold"/>
</dbReference>
<dbReference type="InterPro" id="IPR003006">
    <property type="entry name" value="Ig/MHC_CS"/>
</dbReference>
<dbReference type="InterPro" id="IPR003597">
    <property type="entry name" value="Ig_C1-set"/>
</dbReference>
<dbReference type="InterPro" id="IPR050160">
    <property type="entry name" value="MHC/Immunoglobulin"/>
</dbReference>
<dbReference type="InterPro" id="IPR011162">
    <property type="entry name" value="MHC_I/II-like_Ag-recog"/>
</dbReference>
<dbReference type="InterPro" id="IPR014745">
    <property type="entry name" value="MHC_II_a/b_N"/>
</dbReference>
<dbReference type="InterPro" id="IPR001003">
    <property type="entry name" value="MHC_II_a_N"/>
</dbReference>
<dbReference type="PANTHER" id="PTHR19944:SF94">
    <property type="entry name" value="HLA CLASS II HISTOCOMPATIBILITY ANTIGEN, DQ ALPHA 2 CHAIN"/>
    <property type="match status" value="1"/>
</dbReference>
<dbReference type="PANTHER" id="PTHR19944">
    <property type="entry name" value="MHC CLASS II-RELATED"/>
    <property type="match status" value="1"/>
</dbReference>
<dbReference type="Pfam" id="PF07654">
    <property type="entry name" value="C1-set"/>
    <property type="match status" value="1"/>
</dbReference>
<dbReference type="Pfam" id="PF00993">
    <property type="entry name" value="MHC_II_alpha"/>
    <property type="match status" value="1"/>
</dbReference>
<dbReference type="SMART" id="SM00407">
    <property type="entry name" value="IGc1"/>
    <property type="match status" value="1"/>
</dbReference>
<dbReference type="SMART" id="SM00920">
    <property type="entry name" value="MHC_II_alpha"/>
    <property type="match status" value="1"/>
</dbReference>
<dbReference type="SUPFAM" id="SSF48726">
    <property type="entry name" value="Immunoglobulin"/>
    <property type="match status" value="1"/>
</dbReference>
<dbReference type="SUPFAM" id="SSF54452">
    <property type="entry name" value="MHC antigen-recognition domain"/>
    <property type="match status" value="1"/>
</dbReference>
<dbReference type="PROSITE" id="PS50835">
    <property type="entry name" value="IG_LIKE"/>
    <property type="match status" value="1"/>
</dbReference>
<dbReference type="PROSITE" id="PS00290">
    <property type="entry name" value="IG_MHC"/>
    <property type="match status" value="1"/>
</dbReference>
<accession>P01906</accession>
<accession>A2BF37</accession>
<accession>B0V0E7</accession>
<accession>O19789</accession>
<accession>Q5SQ94</accession>
<accession>Q5SR04</accession>
<evidence type="ECO:0000255" key="1"/>
<evidence type="ECO:0000255" key="2">
    <source>
        <dbReference type="PROSITE-ProRule" id="PRU00114"/>
    </source>
</evidence>
<evidence type="ECO:0000269" key="3">
    <source>
    </source>
</evidence>
<evidence type="ECO:0000269" key="4">
    <source>
    </source>
</evidence>
<evidence type="ECO:0000269" key="5">
    <source>
    </source>
</evidence>
<evidence type="ECO:0000305" key="6"/>
<gene>
    <name type="primary">HLA-DQA2</name>
    <name type="synonym">HLA-DXA</name>
</gene>
<name>DQA2_HUMAN</name>
<proteinExistence type="evidence at protein level"/>
<sequence length="255" mass="28033">MILNKALLLGALALTAVMSPCGGEDIVADHVASYGVNFYQSHGPSGQYTHEFDGDEEFYVDLETKETVWQLPMFSKFISFDPQSALRNMAVGKHTLEFMMRQSNSTAATNEVPEVTVFSKFPVTLGQPNTLICLVDNIFPPVVNITWLSNGHSVTEGVSETSFLSKSDHSFFKISYLTFLPSADEIYDCKVEHWGLDEPLLKHWEPEIPAPMSELTETLVCALGLSVGLMGIVVGTVFIIQGLRSVGASRHQGLL</sequence>
<reference key="1">
    <citation type="journal article" date="1987" name="J. Biol. Chem.">
        <title>Class II genes of the human major histocompatibility complex. Comparisons of the DQ and DX alpha and beta genes.</title>
        <authorList>
            <person name="Jonsson A.-K."/>
            <person name="Hyldig-Nielsen J.-J."/>
            <person name="Servenius B."/>
            <person name="Larhammar D."/>
            <person name="Andersson G."/>
            <person name="Joergensen F."/>
            <person name="Peterson P.A."/>
            <person name="Rask L."/>
        </authorList>
    </citation>
    <scope>NUCLEOTIDE SEQUENCE [GENOMIC DNA]</scope>
</reference>
<reference key="2">
    <citation type="journal article" date="1984" name="Nature">
        <title>Isotypic and allotypic variation of human class II histocompatibility antigen alpha-chain genes.</title>
        <authorList>
            <person name="Auffray C."/>
            <person name="Lillie J.W."/>
            <person name="Arnot D."/>
            <person name="Grossberger D."/>
            <person name="Kappes D."/>
            <person name="Strominger J.L."/>
        </authorList>
    </citation>
    <scope>NUCLEOTIDE SEQUENCE [GENOMIC DNA] (CLONE LAMBDA DCH-10)</scope>
</reference>
<reference key="3">
    <citation type="journal article" date="1987" name="Immunogenetics">
        <title>Structure and expression of HLA-DQ alpha and -DX alpha genes: interallelic alternate splicing of the HLA-DQ alpha gene and functional splicing of the HLA-DQ alpha gene using a retroviral vector.</title>
        <authorList>
            <person name="Auffray C."/>
            <person name="Lillie J.W."/>
            <person name="Korman A.J."/>
            <person name="Boss J.M."/>
            <person name="Frechin N."/>
            <person name="Guillemot F."/>
            <person name="Cooper J."/>
            <person name="Mulligan R.C."/>
            <person name="Strominger J.L."/>
        </authorList>
    </citation>
    <scope>NUCLEOTIDE SEQUENCE [GENOMIC DNA]</scope>
</reference>
<reference key="4">
    <citation type="journal article" date="2003" name="Nature">
        <title>The DNA sequence and analysis of human chromosome 6.</title>
        <authorList>
            <person name="Mungall A.J."/>
            <person name="Palmer S.A."/>
            <person name="Sims S.K."/>
            <person name="Edwards C.A."/>
            <person name="Ashurst J.L."/>
            <person name="Wilming L."/>
            <person name="Jones M.C."/>
            <person name="Horton R."/>
            <person name="Hunt S.E."/>
            <person name="Scott C.E."/>
            <person name="Gilbert J.G.R."/>
            <person name="Clamp M.E."/>
            <person name="Bethel G."/>
            <person name="Milne S."/>
            <person name="Ainscough R."/>
            <person name="Almeida J.P."/>
            <person name="Ambrose K.D."/>
            <person name="Andrews T.D."/>
            <person name="Ashwell R.I.S."/>
            <person name="Babbage A.K."/>
            <person name="Bagguley C.L."/>
            <person name="Bailey J."/>
            <person name="Banerjee R."/>
            <person name="Barker D.J."/>
            <person name="Barlow K.F."/>
            <person name="Bates K."/>
            <person name="Beare D.M."/>
            <person name="Beasley H."/>
            <person name="Beasley O."/>
            <person name="Bird C.P."/>
            <person name="Blakey S.E."/>
            <person name="Bray-Allen S."/>
            <person name="Brook J."/>
            <person name="Brown A.J."/>
            <person name="Brown J.Y."/>
            <person name="Burford D.C."/>
            <person name="Burrill W."/>
            <person name="Burton J."/>
            <person name="Carder C."/>
            <person name="Carter N.P."/>
            <person name="Chapman J.C."/>
            <person name="Clark S.Y."/>
            <person name="Clark G."/>
            <person name="Clee C.M."/>
            <person name="Clegg S."/>
            <person name="Cobley V."/>
            <person name="Collier R.E."/>
            <person name="Collins J.E."/>
            <person name="Colman L.K."/>
            <person name="Corby N.R."/>
            <person name="Coville G.J."/>
            <person name="Culley K.M."/>
            <person name="Dhami P."/>
            <person name="Davies J."/>
            <person name="Dunn M."/>
            <person name="Earthrowl M.E."/>
            <person name="Ellington A.E."/>
            <person name="Evans K.A."/>
            <person name="Faulkner L."/>
            <person name="Francis M.D."/>
            <person name="Frankish A."/>
            <person name="Frankland J."/>
            <person name="French L."/>
            <person name="Garner P."/>
            <person name="Garnett J."/>
            <person name="Ghori M.J."/>
            <person name="Gilby L.M."/>
            <person name="Gillson C.J."/>
            <person name="Glithero R.J."/>
            <person name="Grafham D.V."/>
            <person name="Grant M."/>
            <person name="Gribble S."/>
            <person name="Griffiths C."/>
            <person name="Griffiths M.N.D."/>
            <person name="Hall R."/>
            <person name="Halls K.S."/>
            <person name="Hammond S."/>
            <person name="Harley J.L."/>
            <person name="Hart E.A."/>
            <person name="Heath P.D."/>
            <person name="Heathcott R."/>
            <person name="Holmes S.J."/>
            <person name="Howden P.J."/>
            <person name="Howe K.L."/>
            <person name="Howell G.R."/>
            <person name="Huckle E."/>
            <person name="Humphray S.J."/>
            <person name="Humphries M.D."/>
            <person name="Hunt A.R."/>
            <person name="Johnson C.M."/>
            <person name="Joy A.A."/>
            <person name="Kay M."/>
            <person name="Keenan S.J."/>
            <person name="Kimberley A.M."/>
            <person name="King A."/>
            <person name="Laird G.K."/>
            <person name="Langford C."/>
            <person name="Lawlor S."/>
            <person name="Leongamornlert D.A."/>
            <person name="Leversha M."/>
            <person name="Lloyd C.R."/>
            <person name="Lloyd D.M."/>
            <person name="Loveland J.E."/>
            <person name="Lovell J."/>
            <person name="Martin S."/>
            <person name="Mashreghi-Mohammadi M."/>
            <person name="Maslen G.L."/>
            <person name="Matthews L."/>
            <person name="McCann O.T."/>
            <person name="McLaren S.J."/>
            <person name="McLay K."/>
            <person name="McMurray A."/>
            <person name="Moore M.J.F."/>
            <person name="Mullikin J.C."/>
            <person name="Niblett D."/>
            <person name="Nickerson T."/>
            <person name="Novik K.L."/>
            <person name="Oliver K."/>
            <person name="Overton-Larty E.K."/>
            <person name="Parker A."/>
            <person name="Patel R."/>
            <person name="Pearce A.V."/>
            <person name="Peck A.I."/>
            <person name="Phillimore B.J.C.T."/>
            <person name="Phillips S."/>
            <person name="Plumb R.W."/>
            <person name="Porter K.M."/>
            <person name="Ramsey Y."/>
            <person name="Ranby S.A."/>
            <person name="Rice C.M."/>
            <person name="Ross M.T."/>
            <person name="Searle S.M."/>
            <person name="Sehra H.K."/>
            <person name="Sheridan E."/>
            <person name="Skuce C.D."/>
            <person name="Smith S."/>
            <person name="Smith M."/>
            <person name="Spraggon L."/>
            <person name="Squares S.L."/>
            <person name="Steward C.A."/>
            <person name="Sycamore N."/>
            <person name="Tamlyn-Hall G."/>
            <person name="Tester J."/>
            <person name="Theaker A.J."/>
            <person name="Thomas D.W."/>
            <person name="Thorpe A."/>
            <person name="Tracey A."/>
            <person name="Tromans A."/>
            <person name="Tubby B."/>
            <person name="Wall M."/>
            <person name="Wallis J.M."/>
            <person name="West A.P."/>
            <person name="White S.S."/>
            <person name="Whitehead S.L."/>
            <person name="Whittaker H."/>
            <person name="Wild A."/>
            <person name="Willey D.J."/>
            <person name="Wilmer T.E."/>
            <person name="Wood J.M."/>
            <person name="Wray P.W."/>
            <person name="Wyatt J.C."/>
            <person name="Young L."/>
            <person name="Younger R.M."/>
            <person name="Bentley D.R."/>
            <person name="Coulson A."/>
            <person name="Durbin R.M."/>
            <person name="Hubbard T."/>
            <person name="Sulston J.E."/>
            <person name="Dunham I."/>
            <person name="Rogers J."/>
            <person name="Beck S."/>
        </authorList>
    </citation>
    <scope>NUCLEOTIDE SEQUENCE [LARGE SCALE GENOMIC DNA]</scope>
    <scope>VARIANTS ALA-227 AND ASP-247</scope>
</reference>
<reference key="5">
    <citation type="journal article" date="1994" name="Hum. Immunol.">
        <title>Limited polymorphism of the HLA-DQA2 promoter and identification of a variant octamer.</title>
        <authorList>
            <person name="Rudy G."/>
            <person name="Lew A.M."/>
        </authorList>
    </citation>
    <scope>NUCLEOTIDE SEQUENCE [GENOMIC DNA] OF 1-13</scope>
</reference>
<reference key="6">
    <citation type="journal article" date="1989" name="Proc. Natl. Acad. Sci. U.S.A.">
        <title>Ancient roots for polymorphism at the HLA-DQ alpha locus in primates.</title>
        <authorList>
            <person name="Gyllensten U.B."/>
            <person name="Erlich H.A."/>
        </authorList>
    </citation>
    <scope>NUCLEOTIDE SEQUENCE [GENOMIC DNA] OF 41-103</scope>
</reference>
<reference key="7">
    <citation type="journal article" date="1997" name="J. Immunol.">
        <title>The nonpolymorphic MHC class II isotype, HLA-DQA2, is expressed on the surface of B lymphoblastoid cells.</title>
        <authorList>
            <person name="Rudy G.B."/>
            <person name="Lew A.M."/>
        </authorList>
    </citation>
    <scope>TISSUE SPECIFICITY</scope>
</reference>
<reference key="8">
    <citation type="journal article" date="1996" name="Cell">
        <title>Invariant chain structure and MHC class II function.</title>
        <authorList>
            <person name="Cresswell P."/>
        </authorList>
    </citation>
    <scope>REVIEW</scope>
</reference>
<reference key="9">
    <citation type="journal article" date="2001" name="Mol. Immunol.">
        <title>Presentation of antigens by MHC class II molecules: getting the most out of them.</title>
        <authorList>
            <person name="Villadangos J.A."/>
        </authorList>
    </citation>
    <scope>REVIEW</scope>
</reference>
<reference key="10">
    <citation type="journal article" date="2008" name="EMBO J.">
        <title>MHC class II molecules on the move for successful antigen presentation.</title>
        <authorList>
            <person name="Rocha N."/>
            <person name="Neefjes J."/>
        </authorList>
    </citation>
    <scope>REVIEW</scope>
</reference>
<reference key="11">
    <citation type="journal article" date="2007" name="Immunity">
        <title>Autophagy in MHC class II presentation: sampling from within.</title>
        <authorList>
            <person name="Menendez-Benito V."/>
            <person name="Neefjes J."/>
        </authorList>
    </citation>
    <scope>REVIEW</scope>
</reference>
<reference key="12">
    <citation type="journal article" date="2009" name="J. Cell Sci.">
        <title>MHC class II transport at a glance.</title>
        <authorList>
            <person name="Berger A.C."/>
            <person name="Roche P.A."/>
        </authorList>
    </citation>
    <scope>REVIEW</scope>
</reference>
<reference key="13">
    <citation type="journal article" date="2009" name="World J. Gastroenterol.">
        <title>CD74 in antigen presentation, inflammation, and cancers of the gastrointestinal tract.</title>
        <authorList>
            <person name="Beswick E.J."/>
            <person name="Reyes V.E."/>
        </authorList>
    </citation>
    <scope>REVIEW</scope>
</reference>
<reference key="14">
    <citation type="journal article" date="2012" name="J. Immunol.">
        <title>HLA-DQA2 and HLA-DQB2 genes are specifically expressed in human Langerhans cells and encode a new HLA class II molecule.</title>
        <authorList>
            <person name="Lenormand C."/>
            <person name="Bausinger H."/>
            <person name="Gross F."/>
            <person name="Signorino-Gelo F."/>
            <person name="Koch S."/>
            <person name="Peressin M."/>
            <person name="Fricker D."/>
            <person name="Cazenave J.P."/>
            <person name="Bieber T."/>
            <person name="Hanau D."/>
            <person name="de la Salle H."/>
            <person name="Tourne S."/>
        </authorList>
    </citation>
    <scope>FUNCTION</scope>
    <scope>INTERACTION WITH CD74; HLA-DMA; HLA-DQB1 AND HLA-DQB2</scope>
    <scope>SUBCELLULAR LOCATION</scope>
    <scope>TISSUE SPECIFICITY</scope>
</reference>